<organism>
    <name type="scientific">Bovine respiratory syncytial virus (strain Lelystad)</name>
    <name type="common">BRS</name>
    <dbReference type="NCBI Taxonomy" id="82823"/>
    <lineage>
        <taxon>Viruses</taxon>
        <taxon>Riboviria</taxon>
        <taxon>Orthornavirae</taxon>
        <taxon>Negarnaviricota</taxon>
        <taxon>Haploviricotina</taxon>
        <taxon>Monjiviricetes</taxon>
        <taxon>Mononegavirales</taxon>
        <taxon>Pneumoviridae</taxon>
        <taxon>Orthopneumovirus</taxon>
        <taxon>Orthopneumovirus bovis</taxon>
    </lineage>
</organism>
<comment type="function">
    <molecule>Isoform Membrane-bound glycoprotein G</molecule>
    <text evidence="1">Attaches the virion to the host cell membrane by interacting with heparan sulfate, initiating the infection. Unlike the other paramyxovirus attachment proteins, lacks both neuraminidase and hemagglutinating activities.</text>
</comment>
<comment type="function">
    <molecule>Isoform Secreted glycoprotein G</molecule>
    <text evidence="1">Helps the virus escape antibody-dependent restriction of replication by acting as an antigen decoy and by modulating the activity of leukocytes bearing Fc-gamma receptors.</text>
</comment>
<comment type="subunit">
    <molecule>Isoform Membrane-bound glycoprotein G</molecule>
    <text evidence="1">Homooligomer. Interacts (via N-terminus) with protein M. Part of a complex composed of F1, F2 and G glycoproteins. Interacts with protein SH. Interacts with host heparate sulfate; this interaction probably participates in the viral attachment to the host cell.</text>
</comment>
<comment type="subcellular location">
    <molecule>Isoform Membrane-bound glycoprotein G</molecule>
    <subcellularLocation>
        <location evidence="1">Virion membrane</location>
        <topology evidence="1">Single-pass type II membrane protein</topology>
    </subcellularLocation>
    <subcellularLocation>
        <location evidence="1">Host cell membrane</location>
        <topology evidence="1">Single-pass type II membrane protein</topology>
    </subcellularLocation>
</comment>
<comment type="subcellular location">
    <molecule>Isoform Secreted glycoprotein G</molecule>
    <subcellularLocation>
        <location evidence="2">Secreted</location>
    </subcellularLocation>
    <text evidence="2">The protein is shed from infected cells before the appearance of progeny virus. The initiation at the downstream methionine removes a portion of the transmembrane domain. The remaining hydrophobic portion of the sG protein is essential for translocating it into the lumen of the ER during translation and would likely maintain its membrane association until a proteolytic event releases the mature sG protein into the medium.</text>
</comment>
<comment type="alternative products">
    <event type="alternative initiation"/>
    <isoform>
        <id>O09495-1</id>
        <name>Membrane-bound glycoprotein G</name>
        <sequence type="displayed"/>
    </isoform>
    <isoform>
        <id>O09495-2</id>
        <name>Secreted glycoprotein G</name>
        <sequence type="described" ref="VSP_036517"/>
    </isoform>
</comment>
<comment type="domain">
    <molecule>Isoform Membrane-bound glycoprotein G</molecule>
    <text evidence="1">Contains a linear heparin binding domain essential for virus attachment to the host.</text>
</comment>
<comment type="PTM">
    <molecule>Isoform Secreted glycoprotein G</molecule>
    <text evidence="2">Cleaved to give rise to the mature sG protein which lacks the transmembrane domain.</text>
</comment>
<comment type="PTM">
    <molecule>Isoform Membrane-bound glycoprotein G</molecule>
    <text evidence="1">N- and O-glycosylated. May carry 30-40 separate O-linked carbohydrate chains distributed among the serine and threonine residues.</text>
</comment>
<comment type="PTM">
    <molecule>Isoform Membrane-bound glycoprotein G</molecule>
    <text evidence="1">Palmitoylated.</text>
</comment>
<comment type="similarity">
    <text evidence="5">Belongs to the pneumoviruses glycoprotein G family.</text>
</comment>
<sequence>MSNHTHHLKLKTLKRAWKASKYFIVGLSCLYKFNLKSLVQTALTTLAMITLTSLVITAIIYISVGNAKAKPTSKPTIQQTQRPQNHTSPLFTEHNYKSTHTSIQSTTLSQLLNIDTTRGTTYSHPTDETQNRKIKSQSTLPATRQPPINPSGSNPPENHQDHNNSQTLPYVPCSTCEGNLACSSLCQIGLERAPSRAPTITLKKAPKPKTTKKPTKTTIHHRTSPEAKLQPKNNTAAPQQGILSSPEHHTNQSTTQI</sequence>
<organismHost>
    <name type="scientific">Bos taurus</name>
    <name type="common">Bovine</name>
    <dbReference type="NCBI Taxonomy" id="9913"/>
</organismHost>
<gene>
    <name type="primary">G</name>
</gene>
<feature type="chain" id="PRO_0000142849" description="Major surface glycoprotein G">
    <location>
        <begin position="1"/>
        <end position="257"/>
    </location>
</feature>
<feature type="chain" id="PRO_0000451318" description="Mature secreted glycoprotein G">
    <location>
        <begin position="66"/>
        <end position="257"/>
    </location>
</feature>
<feature type="topological domain" description="Cytoplasmic" evidence="3">
    <location>
        <begin position="1"/>
        <end position="37"/>
    </location>
</feature>
<feature type="transmembrane region" description="Helical" evidence="3">
    <location>
        <begin position="38"/>
        <end position="66"/>
    </location>
</feature>
<feature type="topological domain" description="Extracellular" evidence="3">
    <location>
        <begin position="67"/>
        <end position="257"/>
    </location>
</feature>
<feature type="region of interest" description="Disordered" evidence="4">
    <location>
        <begin position="70"/>
        <end position="92"/>
    </location>
</feature>
<feature type="region of interest" description="Disordered" evidence="4">
    <location>
        <begin position="118"/>
        <end position="166"/>
    </location>
</feature>
<feature type="region of interest" description="Binding to host heparan sulfate" evidence="1">
    <location>
        <begin position="187"/>
        <end position="198"/>
    </location>
</feature>
<feature type="region of interest" description="Disordered" evidence="4">
    <location>
        <begin position="204"/>
        <end position="257"/>
    </location>
</feature>
<feature type="compositionally biased region" description="Polar residues" evidence="4">
    <location>
        <begin position="73"/>
        <end position="90"/>
    </location>
</feature>
<feature type="compositionally biased region" description="Polar residues" evidence="4">
    <location>
        <begin position="150"/>
        <end position="166"/>
    </location>
</feature>
<feature type="compositionally biased region" description="Basic residues" evidence="4">
    <location>
        <begin position="204"/>
        <end position="222"/>
    </location>
</feature>
<feature type="compositionally biased region" description="Polar residues" evidence="4">
    <location>
        <begin position="231"/>
        <end position="243"/>
    </location>
</feature>
<feature type="site" description="Cleavage" evidence="1">
    <location>
        <begin position="65"/>
        <end position="66"/>
    </location>
</feature>
<feature type="glycosylation site" description="O-linked (GalNAc...) threonine; by host" evidence="1">
    <location>
        <position position="72"/>
    </location>
</feature>
<feature type="glycosylation site" description="O-linked (GalNAc...) threonine; by host" evidence="1">
    <location>
        <position position="80"/>
    </location>
</feature>
<feature type="glycosylation site" description="N-linked (GlcNAc...) asparagine; by host" evidence="3">
    <location>
        <position position="85"/>
    </location>
</feature>
<feature type="glycosylation site" description="O-linked (GalNAc...) threonine; by host" evidence="1">
    <location>
        <position position="87"/>
    </location>
</feature>
<feature type="glycosylation site" description="O-linked (GalNAc...) threonine; by host" evidence="1">
    <location>
        <position position="92"/>
    </location>
</feature>
<feature type="glycosylation site" description="O-linked (GalNAc...) serine; by host" evidence="3">
    <location>
        <position position="105"/>
    </location>
</feature>
<feature type="glycosylation site" description="O-linked (GalNAc...) threonine; by host" evidence="3">
    <location>
        <position position="139"/>
    </location>
</feature>
<feature type="glycosylation site" description="N-linked (GlcNAc...) asparagine; by host" evidence="3">
    <location>
        <position position="163"/>
    </location>
</feature>
<feature type="glycosylation site" description="O-linked (GalNAc...) threonine; by host" evidence="3">
    <location>
        <position position="199"/>
    </location>
</feature>
<feature type="glycosylation site" description="O-linked (GalNAc...) threonine; by host" evidence="3">
    <location>
        <position position="215"/>
    </location>
</feature>
<feature type="glycosylation site" description="N-linked (GlcNAc...) asparagine; by host" evidence="3">
    <location>
        <position position="233"/>
    </location>
</feature>
<feature type="glycosylation site" description="N-linked (GlcNAc...) asparagine; by host" evidence="3">
    <location>
        <position position="251"/>
    </location>
</feature>
<feature type="glycosylation site" description="O-linked (GalNAc...) serine; by host" evidence="3">
    <location>
        <position position="253"/>
    </location>
</feature>
<feature type="disulfide bond" evidence="1">
    <location>
        <begin position="173"/>
        <end position="186"/>
    </location>
</feature>
<feature type="disulfide bond" evidence="1">
    <location>
        <begin position="176"/>
        <end position="182"/>
    </location>
</feature>
<feature type="splice variant" id="VSP_036517" description="In isoform Secreted glycoprotein G." evidence="1">
    <location>
        <begin position="1"/>
        <end position="47"/>
    </location>
</feature>
<keyword id="KW-0024">Alternative initiation</keyword>
<keyword id="KW-1015">Disulfide bond</keyword>
<keyword id="KW-0325">Glycoprotein</keyword>
<keyword id="KW-1032">Host cell membrane</keyword>
<keyword id="KW-1043">Host membrane</keyword>
<keyword id="KW-0945">Host-virus interaction</keyword>
<keyword id="KW-0472">Membrane</keyword>
<keyword id="KW-0964">Secreted</keyword>
<keyword id="KW-0812">Transmembrane</keyword>
<keyword id="KW-1133">Transmembrane helix</keyword>
<keyword id="KW-1161">Viral attachment to host cell</keyword>
<keyword id="KW-0899">Viral immunoevasion</keyword>
<keyword id="KW-0946">Virion</keyword>
<keyword id="KW-1160">Virus entry into host cell</keyword>
<name>GLYC_BRSVL</name>
<proteinExistence type="evidence at transcript level"/>
<protein>
    <recommendedName>
        <fullName>Major surface glycoprotein G</fullName>
    </recommendedName>
    <alternativeName>
        <fullName>Attachment glycoprotein G</fullName>
    </alternativeName>
    <alternativeName>
        <fullName>Membrane-bound glycoprotein</fullName>
        <shortName>mG</shortName>
    </alternativeName>
    <component>
        <recommendedName>
            <fullName evidence="2">Mature secreted glycoprotein G</fullName>
            <shortName evidence="2">Mature sG</shortName>
        </recommendedName>
    </component>
</protein>
<dbReference type="EMBL" id="U33539">
    <property type="protein sequence ID" value="AAB50935.1"/>
    <property type="molecule type" value="mRNA"/>
</dbReference>
<dbReference type="SMR" id="O09495"/>
<dbReference type="GlyCosmos" id="O09495">
    <property type="glycosylation" value="13 sites, No reported glycans"/>
</dbReference>
<dbReference type="GO" id="GO:0005576">
    <property type="term" value="C:extracellular region"/>
    <property type="evidence" value="ECO:0007669"/>
    <property type="project" value="UniProtKB-SubCell"/>
</dbReference>
<dbReference type="GO" id="GO:0020002">
    <property type="term" value="C:host cell plasma membrane"/>
    <property type="evidence" value="ECO:0007669"/>
    <property type="project" value="UniProtKB-SubCell"/>
</dbReference>
<dbReference type="GO" id="GO:0016020">
    <property type="term" value="C:membrane"/>
    <property type="evidence" value="ECO:0007669"/>
    <property type="project" value="UniProtKB-KW"/>
</dbReference>
<dbReference type="GO" id="GO:0055036">
    <property type="term" value="C:virion membrane"/>
    <property type="evidence" value="ECO:0007669"/>
    <property type="project" value="UniProtKB-SubCell"/>
</dbReference>
<dbReference type="GO" id="GO:0046718">
    <property type="term" value="P:symbiont entry into host cell"/>
    <property type="evidence" value="ECO:0007669"/>
    <property type="project" value="UniProtKB-KW"/>
</dbReference>
<dbReference type="GO" id="GO:0019062">
    <property type="term" value="P:virion attachment to host cell"/>
    <property type="evidence" value="ECO:0007669"/>
    <property type="project" value="UniProtKB-KW"/>
</dbReference>
<dbReference type="InterPro" id="IPR000925">
    <property type="entry name" value="G_prot"/>
</dbReference>
<dbReference type="Pfam" id="PF00802">
    <property type="entry name" value="Glycoprotein_G"/>
    <property type="match status" value="1"/>
</dbReference>
<accession>O09495</accession>
<reference key="1">
    <citation type="journal article" date="1997" name="J. Gen. Virol.">
        <title>Antigenic and molecular analyses of the variability of bovine respiratory syncytial virus G glycoprotein.</title>
        <authorList>
            <person name="Prozzi D."/>
            <person name="Walravens K."/>
            <person name="Langedijk J.P."/>
            <person name="Daus F."/>
            <person name="Kramps J.A."/>
            <person name="Letesson J.J."/>
        </authorList>
    </citation>
    <scope>NUCLEOTIDE SEQUENCE [MRNA]</scope>
</reference>
<evidence type="ECO:0000250" key="1">
    <source>
        <dbReference type="UniProtKB" id="P03423"/>
    </source>
</evidence>
<evidence type="ECO:0000250" key="2">
    <source>
        <dbReference type="UniProtKB" id="P20895"/>
    </source>
</evidence>
<evidence type="ECO:0000255" key="3"/>
<evidence type="ECO:0000256" key="4">
    <source>
        <dbReference type="SAM" id="MobiDB-lite"/>
    </source>
</evidence>
<evidence type="ECO:0000305" key="5"/>